<keyword id="KW-0119">Carbohydrate metabolism</keyword>
<keyword id="KW-0146">Chitin degradation</keyword>
<keyword id="KW-0325">Glycoprotein</keyword>
<keyword id="KW-0326">Glycosidase</keyword>
<keyword id="KW-0378">Hydrolase</keyword>
<keyword id="KW-0611">Plant defense</keyword>
<keyword id="KW-0624">Polysaccharide degradation</keyword>
<keyword id="KW-1185">Reference proteome</keyword>
<keyword id="KW-0732">Signal</keyword>
<organism>
    <name type="scientific">Medicago truncatula</name>
    <name type="common">Barrel medic</name>
    <name type="synonym">Medicago tribuloides</name>
    <dbReference type="NCBI Taxonomy" id="3880"/>
    <lineage>
        <taxon>Eukaryota</taxon>
        <taxon>Viridiplantae</taxon>
        <taxon>Streptophyta</taxon>
        <taxon>Embryophyta</taxon>
        <taxon>Tracheophyta</taxon>
        <taxon>Spermatophyta</taxon>
        <taxon>Magnoliopsida</taxon>
        <taxon>eudicotyledons</taxon>
        <taxon>Gunneridae</taxon>
        <taxon>Pentapetalae</taxon>
        <taxon>rosids</taxon>
        <taxon>fabids</taxon>
        <taxon>Fabales</taxon>
        <taxon>Fabaceae</taxon>
        <taxon>Papilionoideae</taxon>
        <taxon>50 kb inversion clade</taxon>
        <taxon>NPAAA clade</taxon>
        <taxon>Hologalegina</taxon>
        <taxon>IRL clade</taxon>
        <taxon>Trifolieae</taxon>
        <taxon>Medicago</taxon>
    </lineage>
</organism>
<name>CHT5B_MEDTR</name>
<sequence>MANILNLKHLLTLALILLALATKSSTSSSSSITRVKGIYWLENPFFPPTTVDTSLFTHIFYSFLTPNNITYKLEISSSQILSLNTFTKTFKTKSPPAATLFSIGGAGSNSSLLAFIASDPPACAAFINSTIDVARTFGFDGIDLDWEFPKNTKEMNDLGEMLFQWRKAISDEGATTGRPPLLLTAAVYFAVNFSIYGEPRMYPVNSINENLDWVNVMSYELRGPRSNKTGAPSGTFDPKSNVSVVSGLLSWIHSGVVPEKLVMGMPLYGKSWKLRDPNVHGIGAPSVGSGPGVNGLMAYFQVLDFNRQKSAKVEYDVDTASVYSYSGSTWIGYDNPFTVSIKVGFAQALKLRGYFFWVAGLDTLDWKIATQASKAWKLV</sequence>
<evidence type="ECO:0000255" key="1"/>
<evidence type="ECO:0000255" key="2">
    <source>
        <dbReference type="PROSITE-ProRule" id="PRU00498"/>
    </source>
</evidence>
<evidence type="ECO:0000255" key="3">
    <source>
        <dbReference type="PROSITE-ProRule" id="PRU01258"/>
    </source>
</evidence>
<evidence type="ECO:0000255" key="4">
    <source>
        <dbReference type="PROSITE-ProRule" id="PRU10053"/>
    </source>
</evidence>
<evidence type="ECO:0000269" key="5">
    <source>
    </source>
</evidence>
<evidence type="ECO:0000303" key="6">
    <source>
    </source>
</evidence>
<evidence type="ECO:0000305" key="7"/>
<evidence type="ECO:0000312" key="8">
    <source>
        <dbReference type="EMBL" id="KEH32177.1"/>
    </source>
</evidence>
<reference key="1">
    <citation type="journal article" date="2016" name="Open Biol.">
        <title>A single amino acid substitution in a chitinase of the legume Medicago truncatula is sufficient to gain Nod-factor hydrolase activity.</title>
        <authorList>
            <person name="Zhang L.Y."/>
            <person name="Cai J."/>
            <person name="Li R.J."/>
            <person name="Liu W."/>
            <person name="Wagner C."/>
            <person name="Wong K.B."/>
            <person name="Xie Z.P."/>
            <person name="Staehelin C."/>
        </authorList>
    </citation>
    <scope>NUCLEOTIDE SEQUENCE [GENOMIC DNA]</scope>
    <scope>CATALYTIC ACTIVITY</scope>
    <scope>BIOPHYSICOCHEMICAL PROPERTIES</scope>
    <scope>INDUCTION BY FUSARIUM OXYSPORUM</scope>
    <scope>MUTAGENESIS OF PRO-224; ARG-225; SER-289 AND LEU-296</scope>
</reference>
<reference key="2">
    <citation type="journal article" date="2011" name="Nature">
        <title>The Medicago genome provides insight into the evolution of rhizobial symbioses.</title>
        <authorList>
            <person name="Young N.D."/>
            <person name="Debelle F."/>
            <person name="Oldroyd G.E.D."/>
            <person name="Geurts R."/>
            <person name="Cannon S.B."/>
            <person name="Udvardi M.K."/>
            <person name="Benedito V.A."/>
            <person name="Mayer K.F.X."/>
            <person name="Gouzy J."/>
            <person name="Schoof H."/>
            <person name="Van de Peer Y."/>
            <person name="Proost S."/>
            <person name="Cook D.R."/>
            <person name="Meyers B.C."/>
            <person name="Spannagl M."/>
            <person name="Cheung F."/>
            <person name="De Mita S."/>
            <person name="Krishnakumar V."/>
            <person name="Gundlach H."/>
            <person name="Zhou S."/>
            <person name="Mudge J."/>
            <person name="Bharti A.K."/>
            <person name="Murray J.D."/>
            <person name="Naoumkina M.A."/>
            <person name="Rosen B."/>
            <person name="Silverstein K.A.T."/>
            <person name="Tang H."/>
            <person name="Rombauts S."/>
            <person name="Zhao P.X."/>
            <person name="Zhou P."/>
            <person name="Barbe V."/>
            <person name="Bardou P."/>
            <person name="Bechner M."/>
            <person name="Bellec A."/>
            <person name="Berger A."/>
            <person name="Berges H."/>
            <person name="Bidwell S."/>
            <person name="Bisseling T."/>
            <person name="Choisne N."/>
            <person name="Couloux A."/>
            <person name="Denny R."/>
            <person name="Deshpande S."/>
            <person name="Dai X."/>
            <person name="Doyle J.J."/>
            <person name="Dudez A.-M."/>
            <person name="Farmer A.D."/>
            <person name="Fouteau S."/>
            <person name="Franken C."/>
            <person name="Gibelin C."/>
            <person name="Gish J."/>
            <person name="Goldstein S."/>
            <person name="Gonzalez A.J."/>
            <person name="Green P.J."/>
            <person name="Hallab A."/>
            <person name="Hartog M."/>
            <person name="Hua A."/>
            <person name="Humphray S.J."/>
            <person name="Jeong D.-H."/>
            <person name="Jing Y."/>
            <person name="Jocker A."/>
            <person name="Kenton S.M."/>
            <person name="Kim D.-J."/>
            <person name="Klee K."/>
            <person name="Lai H."/>
            <person name="Lang C."/>
            <person name="Lin S."/>
            <person name="Macmil S.L."/>
            <person name="Magdelenat G."/>
            <person name="Matthews L."/>
            <person name="McCorrison J."/>
            <person name="Monaghan E.L."/>
            <person name="Mun J.-H."/>
            <person name="Najar F.Z."/>
            <person name="Nicholson C."/>
            <person name="Noirot C."/>
            <person name="O'Bleness M."/>
            <person name="Paule C.R."/>
            <person name="Poulain J."/>
            <person name="Prion F."/>
            <person name="Qin B."/>
            <person name="Qu C."/>
            <person name="Retzel E.F."/>
            <person name="Riddle C."/>
            <person name="Sallet E."/>
            <person name="Samain S."/>
            <person name="Samson N."/>
            <person name="Sanders I."/>
            <person name="Saurat O."/>
            <person name="Scarpelli C."/>
            <person name="Schiex T."/>
            <person name="Segurens B."/>
            <person name="Severin A.J."/>
            <person name="Sherrier D.J."/>
            <person name="Shi R."/>
            <person name="Sims S."/>
            <person name="Singer S.R."/>
            <person name="Sinharoy S."/>
            <person name="Sterck L."/>
            <person name="Viollet A."/>
            <person name="Wang B.-B."/>
            <person name="Wang K."/>
            <person name="Wang M."/>
            <person name="Wang X."/>
            <person name="Warfsmann J."/>
            <person name="Weissenbach J."/>
            <person name="White D.D."/>
            <person name="White J.D."/>
            <person name="Wiley G.B."/>
            <person name="Wincker P."/>
            <person name="Xing Y."/>
            <person name="Yang L."/>
            <person name="Yao Z."/>
            <person name="Ying F."/>
            <person name="Zhai J."/>
            <person name="Zhou L."/>
            <person name="Zuber A."/>
            <person name="Denarie J."/>
            <person name="Dixon R.A."/>
            <person name="May G.D."/>
            <person name="Schwartz D.C."/>
            <person name="Rogers J."/>
            <person name="Quetier F."/>
            <person name="Town C.D."/>
            <person name="Roe B.A."/>
        </authorList>
    </citation>
    <scope>NUCLEOTIDE SEQUENCE [LARGE SCALE GENOMIC DNA]</scope>
    <source>
        <strain>cv. Jemalong A17</strain>
    </source>
</reference>
<reference key="3">
    <citation type="journal article" date="2014" name="BMC Genomics">
        <title>An improved genome release (version Mt4.0) for the model legume Medicago truncatula.</title>
        <authorList>
            <person name="Tang H."/>
            <person name="Krishnakumar V."/>
            <person name="Bidwell S."/>
            <person name="Rosen B."/>
            <person name="Chan A."/>
            <person name="Zhou S."/>
            <person name="Gentzbittel L."/>
            <person name="Childs K.L."/>
            <person name="Yandell M."/>
            <person name="Gundlach H."/>
            <person name="Mayer K.F."/>
            <person name="Schwartz D.C."/>
            <person name="Town C.D."/>
        </authorList>
    </citation>
    <scope>GENOME REANNOTATION</scope>
    <source>
        <strain>cv. Jemalong A17</strain>
    </source>
</reference>
<reference key="4">
    <citation type="journal article" date="2018" name="Nat. Plants">
        <title>Whole-genome landscape of Medicago truncatula symbiotic genes.</title>
        <authorList>
            <person name="Pecrix Y."/>
            <person name="Staton S.E."/>
            <person name="Sallet E."/>
            <person name="Lelandais-Briere C."/>
            <person name="Moreau S."/>
            <person name="Carrere S."/>
            <person name="Blein T."/>
            <person name="Jardinaud M.F."/>
            <person name="Latrasse D."/>
            <person name="Zouine M."/>
            <person name="Zahm M."/>
            <person name="Kreplak J."/>
            <person name="Mayjonade B."/>
            <person name="Satge C."/>
            <person name="Perez M."/>
            <person name="Cauet S."/>
            <person name="Marande W."/>
            <person name="Chantry-Darmon C."/>
            <person name="Lopez-Roques C."/>
            <person name="Bouchez O."/>
            <person name="Berard A."/>
            <person name="Debelle F."/>
            <person name="Munos S."/>
            <person name="Bendahmane A."/>
            <person name="Berges H."/>
            <person name="Niebel A."/>
            <person name="Buitink J."/>
            <person name="Frugier F."/>
            <person name="Benhamed M."/>
            <person name="Crespi M."/>
            <person name="Gouzy J."/>
            <person name="Gamas P."/>
        </authorList>
    </citation>
    <scope>NUCLEOTIDE SEQUENCE [LARGE SCALE GENOMIC DNA]</scope>
    <source>
        <strain>cv. Jemalong A17</strain>
    </source>
</reference>
<gene>
    <name evidence="6" type="primary">CHIT5B</name>
    <name evidence="8" type="ordered locus">MTR_4g117000</name>
</gene>
<feature type="signal peptide" evidence="1">
    <location>
        <begin position="1"/>
        <end position="26"/>
    </location>
</feature>
<feature type="chain" id="PRO_5014499891" description="Class V chitinase CHIT5b">
    <location>
        <begin position="27"/>
        <end position="379"/>
    </location>
</feature>
<feature type="domain" description="GH18" evidence="3">
    <location>
        <begin position="34"/>
        <end position="379"/>
    </location>
</feature>
<feature type="active site" description="Proton donor" evidence="3">
    <location>
        <position position="147"/>
    </location>
</feature>
<feature type="glycosylation site" description="N-linked (GlcNAc...) asparagine" evidence="2">
    <location>
        <position position="68"/>
    </location>
</feature>
<feature type="glycosylation site" description="N-linked (GlcNAc...) asparagine" evidence="2">
    <location>
        <position position="109"/>
    </location>
</feature>
<feature type="glycosylation site" description="N-linked (GlcNAc...) asparagine" evidence="2">
    <location>
        <position position="128"/>
    </location>
</feature>
<feature type="glycosylation site" description="N-linked (GlcNAc...) asparagine" evidence="2">
    <location>
        <position position="192"/>
    </location>
</feature>
<feature type="glycosylation site" description="N-linked (GlcNAc...) asparagine" evidence="2">
    <location>
        <position position="227"/>
    </location>
</feature>
<feature type="glycosylation site" description="N-linked (GlcNAc...) asparagine" evidence="2">
    <location>
        <position position="241"/>
    </location>
</feature>
<feature type="mutagenesis site" description="No effect on chitinase activity. Confers Nod factor hydrolase activity; when associated with G-225." evidence="5">
    <original>P</original>
    <variation>S</variation>
    <location>
        <position position="224"/>
    </location>
</feature>
<feature type="mutagenesis site" description="No effect on chitinase activity. Confers Nod factor hydrolase activity; when associated with S-224." evidence="5">
    <original>R</original>
    <variation>G</variation>
    <location>
        <position position="225"/>
    </location>
</feature>
<feature type="mutagenesis site" description="No effect on chitinase activity." evidence="5">
    <original>S</original>
    <variation>A</variation>
    <variation>K</variation>
    <variation>P</variation>
    <location>
        <position position="289"/>
    </location>
</feature>
<feature type="mutagenesis site" description="Confers Nod factor hydrolase activity." evidence="5">
    <original>S</original>
    <variation>P</variation>
    <location>
        <position position="289"/>
    </location>
</feature>
<feature type="mutagenesis site" description="No effect on chitinase activity." evidence="5">
    <original>L</original>
    <variation>G</variation>
    <location>
        <position position="296"/>
    </location>
</feature>
<feature type="sequence conflict" description="In Ref. 1; ANS10045." evidence="7" ref="1">
    <location>
        <position position="27"/>
    </location>
</feature>
<feature type="sequence conflict" description="In Ref. 1; ANS10045." evidence="7" ref="1">
    <original>T</original>
    <variation>I</variation>
    <location>
        <position position="50"/>
    </location>
</feature>
<feature type="sequence conflict" description="In Ref. 1; ANS10045." evidence="7" ref="1">
    <original>L</original>
    <variation>F</variation>
    <location>
        <position position="113"/>
    </location>
</feature>
<feature type="sequence conflict" description="In Ref. 1; ANS10045." evidence="7" ref="1">
    <original>C</original>
    <variation>R</variation>
    <location>
        <position position="123"/>
    </location>
</feature>
<feature type="sequence conflict" description="In Ref. 1; ANS10045." evidence="7" ref="1">
    <original>D</original>
    <variation>N</variation>
    <location>
        <position position="132"/>
    </location>
</feature>
<feature type="sequence conflict" description="In Ref. 1; ANS10045." evidence="7" ref="1">
    <original>D</original>
    <variation>N</variation>
    <location>
        <position position="140"/>
    </location>
</feature>
<feature type="sequence conflict" description="In Ref. 1; ANS10045." evidence="7" ref="1">
    <original>M</original>
    <variation>L</variation>
    <location>
        <position position="161"/>
    </location>
</feature>
<feature type="sequence conflict" description="In Ref. 1; ANS10045." evidence="7" ref="1">
    <original>N</original>
    <variation>D</variation>
    <location>
        <position position="294"/>
    </location>
</feature>
<protein>
    <recommendedName>
        <fullName evidence="7">Class V chitinase CHIT5b</fullName>
        <shortName evidence="6">MtCHIT5b</shortName>
        <ecNumber evidence="5">3.2.1.14</ecNumber>
    </recommendedName>
</protein>
<comment type="function">
    <text evidence="5">Possesses chitinase activity in vitro toward glycol chitin, carboxymethyl-chitin, colloidal chitin, and the chitin oligosaccharides (N-acetylglucosamine) (GlcNAc)6 and (GlcNAc)5 (PubMed:27383628). Hydrolyzes (GlcNAc)6 into (GlcNAc)4 and (GlcNAc)2, or two (GlcNAc)3 molecules (PubMed:27383628). Has the capacity to reduce hyphal growth of the fungus Trichoderma viride in an agar-plate bioassay (PubMed:27383628).</text>
</comment>
<comment type="catalytic activity">
    <reaction evidence="4 5">
        <text>Random endo-hydrolysis of N-acetyl-beta-D-glucosaminide (1-&gt;4)-beta-linkages in chitin and chitodextrins.</text>
        <dbReference type="EC" id="3.2.1.14"/>
    </reaction>
</comment>
<comment type="biophysicochemical properties">
    <kinetics>
        <KM evidence="5">10.5 mM for (GlcNAc)6</KM>
        <KM evidence="5">8.6 mM for (GlcNAc)5</KM>
    </kinetics>
</comment>
<comment type="pathway">
    <text evidence="7">Glycan degradation; chitin degradation.</text>
</comment>
<comment type="induction">
    <text evidence="5">Induced by the fungal pathogen Fusarium oxysporum.</text>
</comment>
<comment type="similarity">
    <text evidence="7">Belongs to the glycosyl hydrolase 18 family. Chitinase class V subfamily.</text>
</comment>
<accession>A0A072UR65</accession>
<accession>A0A1B1J8W5</accession>
<proteinExistence type="evidence at protein level"/>
<dbReference type="EC" id="3.2.1.14" evidence="5"/>
<dbReference type="EMBL" id="KU041646">
    <property type="protein sequence ID" value="ANS10045.1"/>
    <property type="molecule type" value="Genomic_DNA"/>
</dbReference>
<dbReference type="EMBL" id="CM001220">
    <property type="protein sequence ID" value="KEH32177.1"/>
    <property type="molecule type" value="Genomic_DNA"/>
</dbReference>
<dbReference type="EMBL" id="PSQE01000004">
    <property type="protein sequence ID" value="RHN64104.1"/>
    <property type="molecule type" value="Genomic_DNA"/>
</dbReference>
<dbReference type="SMR" id="A0A072UR65"/>
<dbReference type="STRING" id="3880.A0A072UR65"/>
<dbReference type="GlyCosmos" id="A0A072UR65">
    <property type="glycosylation" value="6 sites, No reported glycans"/>
</dbReference>
<dbReference type="EnsemblPlants" id="rna26886">
    <property type="protein sequence ID" value="RHN64104.1"/>
    <property type="gene ID" value="gene26886"/>
</dbReference>
<dbReference type="GeneID" id="25493984"/>
<dbReference type="Gramene" id="rna26886">
    <property type="protein sequence ID" value="RHN64104.1"/>
    <property type="gene ID" value="gene26886"/>
</dbReference>
<dbReference type="KEGG" id="mtr:25493984"/>
<dbReference type="HOGENOM" id="CLU_002833_3_2_1"/>
<dbReference type="OrthoDB" id="76388at2759"/>
<dbReference type="UniPathway" id="UPA00349"/>
<dbReference type="Proteomes" id="UP000002051">
    <property type="component" value="Chromosome 4"/>
</dbReference>
<dbReference type="Proteomes" id="UP000265566">
    <property type="component" value="Chromosome 4"/>
</dbReference>
<dbReference type="ExpressionAtlas" id="A0A072UR65">
    <property type="expression patterns" value="differential"/>
</dbReference>
<dbReference type="GO" id="GO:0005576">
    <property type="term" value="C:extracellular region"/>
    <property type="evidence" value="ECO:0000318"/>
    <property type="project" value="GO_Central"/>
</dbReference>
<dbReference type="GO" id="GO:0008061">
    <property type="term" value="F:chitin binding"/>
    <property type="evidence" value="ECO:0007669"/>
    <property type="project" value="InterPro"/>
</dbReference>
<dbReference type="GO" id="GO:0004568">
    <property type="term" value="F:chitinase activity"/>
    <property type="evidence" value="ECO:0000314"/>
    <property type="project" value="UniProtKB"/>
</dbReference>
<dbReference type="GO" id="GO:0008843">
    <property type="term" value="F:endochitinase activity"/>
    <property type="evidence" value="ECO:0007669"/>
    <property type="project" value="UniProtKB-EC"/>
</dbReference>
<dbReference type="GO" id="GO:0006032">
    <property type="term" value="P:chitin catabolic process"/>
    <property type="evidence" value="ECO:0000314"/>
    <property type="project" value="UniProtKB"/>
</dbReference>
<dbReference type="GO" id="GO:0050832">
    <property type="term" value="P:defense response to fungus"/>
    <property type="evidence" value="ECO:0000314"/>
    <property type="project" value="UniProtKB"/>
</dbReference>
<dbReference type="GO" id="GO:0000272">
    <property type="term" value="P:polysaccharide catabolic process"/>
    <property type="evidence" value="ECO:0007669"/>
    <property type="project" value="UniProtKB-KW"/>
</dbReference>
<dbReference type="CDD" id="cd02879">
    <property type="entry name" value="GH18_plant_chitinase_class_V"/>
    <property type="match status" value="1"/>
</dbReference>
<dbReference type="FunFam" id="3.10.50.10:FF:000003">
    <property type="entry name" value="Class V chitinase CHIT5b"/>
    <property type="match status" value="1"/>
</dbReference>
<dbReference type="Gene3D" id="3.10.50.10">
    <property type="match status" value="1"/>
</dbReference>
<dbReference type="Gene3D" id="3.20.20.80">
    <property type="entry name" value="Glycosidases"/>
    <property type="match status" value="1"/>
</dbReference>
<dbReference type="InterPro" id="IPR011583">
    <property type="entry name" value="Chitinase_II/V-like_cat"/>
</dbReference>
<dbReference type="InterPro" id="IPR029070">
    <property type="entry name" value="Chitinase_insertion_sf"/>
</dbReference>
<dbReference type="InterPro" id="IPR001223">
    <property type="entry name" value="Glyco_hydro18_cat"/>
</dbReference>
<dbReference type="InterPro" id="IPR001579">
    <property type="entry name" value="Glyco_hydro_18_chit_AS"/>
</dbReference>
<dbReference type="InterPro" id="IPR017853">
    <property type="entry name" value="Glycoside_hydrolase_SF"/>
</dbReference>
<dbReference type="InterPro" id="IPR050314">
    <property type="entry name" value="Glycosyl_Hydrlase_18"/>
</dbReference>
<dbReference type="PANTHER" id="PTHR11177">
    <property type="entry name" value="CHITINASE"/>
    <property type="match status" value="1"/>
</dbReference>
<dbReference type="PANTHER" id="PTHR11177:SF396">
    <property type="entry name" value="NOD FACTOR HYDROLASE PROTEIN 1"/>
    <property type="match status" value="1"/>
</dbReference>
<dbReference type="Pfam" id="PF00704">
    <property type="entry name" value="Glyco_hydro_18"/>
    <property type="match status" value="1"/>
</dbReference>
<dbReference type="SMART" id="SM00636">
    <property type="entry name" value="Glyco_18"/>
    <property type="match status" value="1"/>
</dbReference>
<dbReference type="SUPFAM" id="SSF51445">
    <property type="entry name" value="(Trans)glycosidases"/>
    <property type="match status" value="1"/>
</dbReference>
<dbReference type="SUPFAM" id="SSF54556">
    <property type="entry name" value="Chitinase insertion domain"/>
    <property type="match status" value="1"/>
</dbReference>
<dbReference type="PROSITE" id="PS01095">
    <property type="entry name" value="GH18_1"/>
    <property type="match status" value="1"/>
</dbReference>
<dbReference type="PROSITE" id="PS51910">
    <property type="entry name" value="GH18_2"/>
    <property type="match status" value="1"/>
</dbReference>